<feature type="chain" id="PRO_0000154394" description="N-(5'-phosphoribosyl)anthranilate isomerase">
    <location>
        <begin position="1"/>
        <end position="220"/>
    </location>
</feature>
<protein>
    <recommendedName>
        <fullName evidence="1">N-(5'-phosphoribosyl)anthranilate isomerase</fullName>
        <shortName evidence="1">PRAI</shortName>
        <ecNumber evidence="1">5.3.1.24</ecNumber>
    </recommendedName>
</protein>
<comment type="catalytic activity">
    <reaction evidence="1">
        <text>N-(5-phospho-beta-D-ribosyl)anthranilate = 1-(2-carboxyphenylamino)-1-deoxy-D-ribulose 5-phosphate</text>
        <dbReference type="Rhea" id="RHEA:21540"/>
        <dbReference type="ChEBI" id="CHEBI:18277"/>
        <dbReference type="ChEBI" id="CHEBI:58613"/>
        <dbReference type="EC" id="5.3.1.24"/>
    </reaction>
</comment>
<comment type="pathway">
    <text evidence="1">Amino-acid biosynthesis; L-tryptophan biosynthesis; L-tryptophan from chorismate: step 3/5.</text>
</comment>
<comment type="similarity">
    <text evidence="1">Belongs to the TrpF family.</text>
</comment>
<comment type="sequence caution" evidence="2">
    <conflict type="erroneous initiation">
        <sequence resource="EMBL-CDS" id="AAF84183"/>
    </conflict>
</comment>
<name>TRPF_XYLFA</name>
<gene>
    <name evidence="1" type="primary">trpF</name>
    <name type="ordered locus">XF_1374</name>
</gene>
<evidence type="ECO:0000255" key="1">
    <source>
        <dbReference type="HAMAP-Rule" id="MF_00135"/>
    </source>
</evidence>
<evidence type="ECO:0000305" key="2"/>
<reference key="1">
    <citation type="journal article" date="2000" name="Nature">
        <title>The genome sequence of the plant pathogen Xylella fastidiosa.</title>
        <authorList>
            <person name="Simpson A.J.G."/>
            <person name="Reinach F.C."/>
            <person name="Arruda P."/>
            <person name="Abreu F.A."/>
            <person name="Acencio M."/>
            <person name="Alvarenga R."/>
            <person name="Alves L.M.C."/>
            <person name="Araya J.E."/>
            <person name="Baia G.S."/>
            <person name="Baptista C.S."/>
            <person name="Barros M.H."/>
            <person name="Bonaccorsi E.D."/>
            <person name="Bordin S."/>
            <person name="Bove J.M."/>
            <person name="Briones M.R.S."/>
            <person name="Bueno M.R.P."/>
            <person name="Camargo A.A."/>
            <person name="Camargo L.E.A."/>
            <person name="Carraro D.M."/>
            <person name="Carrer H."/>
            <person name="Colauto N.B."/>
            <person name="Colombo C."/>
            <person name="Costa F.F."/>
            <person name="Costa M.C.R."/>
            <person name="Costa-Neto C.M."/>
            <person name="Coutinho L.L."/>
            <person name="Cristofani M."/>
            <person name="Dias-Neto E."/>
            <person name="Docena C."/>
            <person name="El-Dorry H."/>
            <person name="Facincani A.P."/>
            <person name="Ferreira A.J.S."/>
            <person name="Ferreira V.C.A."/>
            <person name="Ferro J.A."/>
            <person name="Fraga J.S."/>
            <person name="Franca S.C."/>
            <person name="Franco M.C."/>
            <person name="Frohme M."/>
            <person name="Furlan L.R."/>
            <person name="Garnier M."/>
            <person name="Goldman G.H."/>
            <person name="Goldman M.H.S."/>
            <person name="Gomes S.L."/>
            <person name="Gruber A."/>
            <person name="Ho P.L."/>
            <person name="Hoheisel J.D."/>
            <person name="Junqueira M.L."/>
            <person name="Kemper E.L."/>
            <person name="Kitajima J.P."/>
            <person name="Krieger J.E."/>
            <person name="Kuramae E.E."/>
            <person name="Laigret F."/>
            <person name="Lambais M.R."/>
            <person name="Leite L.C.C."/>
            <person name="Lemos E.G.M."/>
            <person name="Lemos M.V.F."/>
            <person name="Lopes S.A."/>
            <person name="Lopes C.R."/>
            <person name="Machado J.A."/>
            <person name="Machado M.A."/>
            <person name="Madeira A.M.B.N."/>
            <person name="Madeira H.M.F."/>
            <person name="Marino C.L."/>
            <person name="Marques M.V."/>
            <person name="Martins E.A.L."/>
            <person name="Martins E.M.F."/>
            <person name="Matsukuma A.Y."/>
            <person name="Menck C.F.M."/>
            <person name="Miracca E.C."/>
            <person name="Miyaki C.Y."/>
            <person name="Monteiro-Vitorello C.B."/>
            <person name="Moon D.H."/>
            <person name="Nagai M.A."/>
            <person name="Nascimento A.L.T.O."/>
            <person name="Netto L.E.S."/>
            <person name="Nhani A. Jr."/>
            <person name="Nobrega F.G."/>
            <person name="Nunes L.R."/>
            <person name="Oliveira M.A."/>
            <person name="de Oliveira M.C."/>
            <person name="de Oliveira R.C."/>
            <person name="Palmieri D.A."/>
            <person name="Paris A."/>
            <person name="Peixoto B.R."/>
            <person name="Pereira G.A.G."/>
            <person name="Pereira H.A. Jr."/>
            <person name="Pesquero J.B."/>
            <person name="Quaggio R.B."/>
            <person name="Roberto P.G."/>
            <person name="Rodrigues V."/>
            <person name="de Rosa A.J.M."/>
            <person name="de Rosa V.E. Jr."/>
            <person name="de Sa R.G."/>
            <person name="Santelli R.V."/>
            <person name="Sawasaki H.E."/>
            <person name="da Silva A.C.R."/>
            <person name="da Silva A.M."/>
            <person name="da Silva F.R."/>
            <person name="Silva W.A. Jr."/>
            <person name="da Silveira J.F."/>
            <person name="Silvestri M.L.Z."/>
            <person name="Siqueira W.J."/>
            <person name="de Souza A.A."/>
            <person name="de Souza A.P."/>
            <person name="Terenzi M.F."/>
            <person name="Truffi D."/>
            <person name="Tsai S.M."/>
            <person name="Tsuhako M.H."/>
            <person name="Vallada H."/>
            <person name="Van Sluys M.A."/>
            <person name="Verjovski-Almeida S."/>
            <person name="Vettore A.L."/>
            <person name="Zago M.A."/>
            <person name="Zatz M."/>
            <person name="Meidanis J."/>
            <person name="Setubal J.C."/>
        </authorList>
    </citation>
    <scope>NUCLEOTIDE SEQUENCE [LARGE SCALE GENOMIC DNA]</scope>
    <source>
        <strain>9a5c</strain>
    </source>
</reference>
<proteinExistence type="inferred from homology"/>
<keyword id="KW-0028">Amino-acid biosynthesis</keyword>
<keyword id="KW-0057">Aromatic amino acid biosynthesis</keyword>
<keyword id="KW-0413">Isomerase</keyword>
<keyword id="KW-0822">Tryptophan biosynthesis</keyword>
<dbReference type="EC" id="5.3.1.24" evidence="1"/>
<dbReference type="EMBL" id="AE003849">
    <property type="protein sequence ID" value="AAF84183.1"/>
    <property type="status" value="ALT_INIT"/>
    <property type="molecule type" value="Genomic_DNA"/>
</dbReference>
<dbReference type="PIR" id="B82691">
    <property type="entry name" value="B82691"/>
</dbReference>
<dbReference type="RefSeq" id="WP_031336814.1">
    <property type="nucleotide sequence ID" value="NC_002488.3"/>
</dbReference>
<dbReference type="SMR" id="Q9PDK5"/>
<dbReference type="STRING" id="160492.XF_1374"/>
<dbReference type="KEGG" id="xfa:XF_1374"/>
<dbReference type="eggNOG" id="COG0135">
    <property type="taxonomic scope" value="Bacteria"/>
</dbReference>
<dbReference type="HOGENOM" id="CLU_076364_2_0_6"/>
<dbReference type="UniPathway" id="UPA00035">
    <property type="reaction ID" value="UER00042"/>
</dbReference>
<dbReference type="Proteomes" id="UP000000812">
    <property type="component" value="Chromosome"/>
</dbReference>
<dbReference type="GO" id="GO:0004640">
    <property type="term" value="F:phosphoribosylanthranilate isomerase activity"/>
    <property type="evidence" value="ECO:0007669"/>
    <property type="project" value="UniProtKB-UniRule"/>
</dbReference>
<dbReference type="GO" id="GO:0000162">
    <property type="term" value="P:L-tryptophan biosynthetic process"/>
    <property type="evidence" value="ECO:0007669"/>
    <property type="project" value="UniProtKB-UniRule"/>
</dbReference>
<dbReference type="CDD" id="cd00405">
    <property type="entry name" value="PRAI"/>
    <property type="match status" value="1"/>
</dbReference>
<dbReference type="Gene3D" id="3.20.20.70">
    <property type="entry name" value="Aldolase class I"/>
    <property type="match status" value="1"/>
</dbReference>
<dbReference type="HAMAP" id="MF_00135">
    <property type="entry name" value="PRAI"/>
    <property type="match status" value="1"/>
</dbReference>
<dbReference type="InterPro" id="IPR013785">
    <property type="entry name" value="Aldolase_TIM"/>
</dbReference>
<dbReference type="InterPro" id="IPR001240">
    <property type="entry name" value="PRAI_dom"/>
</dbReference>
<dbReference type="InterPro" id="IPR011060">
    <property type="entry name" value="RibuloseP-bd_barrel"/>
</dbReference>
<dbReference type="InterPro" id="IPR044643">
    <property type="entry name" value="TrpF_fam"/>
</dbReference>
<dbReference type="NCBIfam" id="NF002296">
    <property type="entry name" value="PRK01222.1-2"/>
    <property type="match status" value="1"/>
</dbReference>
<dbReference type="PANTHER" id="PTHR42894">
    <property type="entry name" value="N-(5'-PHOSPHORIBOSYL)ANTHRANILATE ISOMERASE"/>
    <property type="match status" value="1"/>
</dbReference>
<dbReference type="PANTHER" id="PTHR42894:SF1">
    <property type="entry name" value="N-(5'-PHOSPHORIBOSYL)ANTHRANILATE ISOMERASE"/>
    <property type="match status" value="1"/>
</dbReference>
<dbReference type="Pfam" id="PF00697">
    <property type="entry name" value="PRAI"/>
    <property type="match status" value="1"/>
</dbReference>
<dbReference type="SUPFAM" id="SSF51366">
    <property type="entry name" value="Ribulose-phoshate binding barrel"/>
    <property type="match status" value="1"/>
</dbReference>
<sequence>MNISPYRTRIKFCGMTRVGDVRLASELGVDAVGLIFASGSSRLLTVSAACAIRRTVAPMVNVVALFQNNSADEIHTVVRTVRPTLLQFHGEEEDAFCRTFNVPYLKAIPMAGAEAKRICTRTLYLKYPNAAGFIFDSHLKGGTGQTFDWSRLPIDLQHPFLLAGGITPENVFDAIAATVPWGVDVSSGIELQPGIKDGDKMRQFVEEVRRADGRRLFGVA</sequence>
<organism>
    <name type="scientific">Xylella fastidiosa (strain 9a5c)</name>
    <dbReference type="NCBI Taxonomy" id="160492"/>
    <lineage>
        <taxon>Bacteria</taxon>
        <taxon>Pseudomonadati</taxon>
        <taxon>Pseudomonadota</taxon>
        <taxon>Gammaproteobacteria</taxon>
        <taxon>Lysobacterales</taxon>
        <taxon>Lysobacteraceae</taxon>
        <taxon>Xylella</taxon>
    </lineage>
</organism>
<accession>Q9PDK5</accession>